<dbReference type="EMBL" id="CP001047">
    <property type="protein sequence ID" value="ACF07125.1"/>
    <property type="molecule type" value="Genomic_DNA"/>
</dbReference>
<dbReference type="RefSeq" id="WP_012498082.1">
    <property type="nucleotide sequence ID" value="NC_011025.1"/>
</dbReference>
<dbReference type="SMR" id="B3PM73"/>
<dbReference type="STRING" id="243272.MARTH_orf206"/>
<dbReference type="KEGG" id="mat:MARTH_orf206"/>
<dbReference type="eggNOG" id="COG0782">
    <property type="taxonomic scope" value="Bacteria"/>
</dbReference>
<dbReference type="HOGENOM" id="CLU_101379_2_1_14"/>
<dbReference type="Proteomes" id="UP000008812">
    <property type="component" value="Chromosome"/>
</dbReference>
<dbReference type="GO" id="GO:0003677">
    <property type="term" value="F:DNA binding"/>
    <property type="evidence" value="ECO:0007669"/>
    <property type="project" value="UniProtKB-UniRule"/>
</dbReference>
<dbReference type="GO" id="GO:0070063">
    <property type="term" value="F:RNA polymerase binding"/>
    <property type="evidence" value="ECO:0007669"/>
    <property type="project" value="InterPro"/>
</dbReference>
<dbReference type="GO" id="GO:0006354">
    <property type="term" value="P:DNA-templated transcription elongation"/>
    <property type="evidence" value="ECO:0007669"/>
    <property type="project" value="TreeGrafter"/>
</dbReference>
<dbReference type="GO" id="GO:0032784">
    <property type="term" value="P:regulation of DNA-templated transcription elongation"/>
    <property type="evidence" value="ECO:0007669"/>
    <property type="project" value="UniProtKB-UniRule"/>
</dbReference>
<dbReference type="FunFam" id="1.10.287.180:FF:000001">
    <property type="entry name" value="Transcription elongation factor GreA"/>
    <property type="match status" value="1"/>
</dbReference>
<dbReference type="Gene3D" id="3.10.50.30">
    <property type="entry name" value="Transcription elongation factor, GreA/GreB, C-terminal domain"/>
    <property type="match status" value="1"/>
</dbReference>
<dbReference type="Gene3D" id="1.10.287.180">
    <property type="entry name" value="Transcription elongation factor, GreA/GreB, N-terminal domain"/>
    <property type="match status" value="1"/>
</dbReference>
<dbReference type="HAMAP" id="MF_00105">
    <property type="entry name" value="GreA_GreB"/>
    <property type="match status" value="1"/>
</dbReference>
<dbReference type="InterPro" id="IPR036953">
    <property type="entry name" value="GreA/GreB_C_sf"/>
</dbReference>
<dbReference type="InterPro" id="IPR018151">
    <property type="entry name" value="TF_GreA/GreB_CS"/>
</dbReference>
<dbReference type="InterPro" id="IPR006359">
    <property type="entry name" value="Tscrpt_elong_fac_GreA"/>
</dbReference>
<dbReference type="InterPro" id="IPR028624">
    <property type="entry name" value="Tscrpt_elong_fac_GreA/B"/>
</dbReference>
<dbReference type="InterPro" id="IPR001437">
    <property type="entry name" value="Tscrpt_elong_fac_GreA/B_C"/>
</dbReference>
<dbReference type="InterPro" id="IPR023459">
    <property type="entry name" value="Tscrpt_elong_fac_GreA/B_fam"/>
</dbReference>
<dbReference type="InterPro" id="IPR022691">
    <property type="entry name" value="Tscrpt_elong_fac_GreA/B_N"/>
</dbReference>
<dbReference type="InterPro" id="IPR036805">
    <property type="entry name" value="Tscrpt_elong_fac_GreA/B_N_sf"/>
</dbReference>
<dbReference type="NCBIfam" id="TIGR01462">
    <property type="entry name" value="greA"/>
    <property type="match status" value="1"/>
</dbReference>
<dbReference type="NCBIfam" id="NF001263">
    <property type="entry name" value="PRK00226.1-4"/>
    <property type="match status" value="1"/>
</dbReference>
<dbReference type="PANTHER" id="PTHR30437">
    <property type="entry name" value="TRANSCRIPTION ELONGATION FACTOR GREA"/>
    <property type="match status" value="1"/>
</dbReference>
<dbReference type="PANTHER" id="PTHR30437:SF4">
    <property type="entry name" value="TRANSCRIPTION ELONGATION FACTOR GREA"/>
    <property type="match status" value="1"/>
</dbReference>
<dbReference type="Pfam" id="PF01272">
    <property type="entry name" value="GreA_GreB"/>
    <property type="match status" value="1"/>
</dbReference>
<dbReference type="Pfam" id="PF03449">
    <property type="entry name" value="GreA_GreB_N"/>
    <property type="match status" value="1"/>
</dbReference>
<dbReference type="PIRSF" id="PIRSF006092">
    <property type="entry name" value="GreA_GreB"/>
    <property type="match status" value="1"/>
</dbReference>
<dbReference type="SUPFAM" id="SSF54534">
    <property type="entry name" value="FKBP-like"/>
    <property type="match status" value="1"/>
</dbReference>
<dbReference type="SUPFAM" id="SSF46557">
    <property type="entry name" value="GreA transcript cleavage protein, N-terminal domain"/>
    <property type="match status" value="1"/>
</dbReference>
<dbReference type="PROSITE" id="PS00830">
    <property type="entry name" value="GREAB_2"/>
    <property type="match status" value="1"/>
</dbReference>
<protein>
    <recommendedName>
        <fullName evidence="1">Transcription elongation factor GreA</fullName>
    </recommendedName>
    <alternativeName>
        <fullName evidence="1">Transcript cleavage factor GreA</fullName>
    </alternativeName>
</protein>
<organism>
    <name type="scientific">Metamycoplasma arthritidis (strain 158L3-1)</name>
    <name type="common">Mycoplasma arthritidis</name>
    <dbReference type="NCBI Taxonomy" id="243272"/>
    <lineage>
        <taxon>Bacteria</taxon>
        <taxon>Bacillati</taxon>
        <taxon>Mycoplasmatota</taxon>
        <taxon>Mycoplasmoidales</taxon>
        <taxon>Metamycoplasmataceae</taxon>
        <taxon>Metamycoplasma</taxon>
    </lineage>
</organism>
<comment type="function">
    <text evidence="1">Necessary for efficient RNA polymerase transcription elongation past template-encoded arresting sites. The arresting sites in DNA have the property of trapping a certain fraction of elongating RNA polymerases that pass through, resulting in locked ternary complexes. Cleavage of the nascent transcript by cleavage factors such as GreA or GreB allows the resumption of elongation from the new 3'terminus. GreA releases sequences of 2 to 3 nucleotides.</text>
</comment>
<comment type="similarity">
    <text evidence="1">Belongs to the GreA/GreB family.</text>
</comment>
<gene>
    <name evidence="1" type="primary">greA</name>
    <name type="ordered locus">MARTH_orf206</name>
</gene>
<name>GREA_META1</name>
<sequence>MPNKEEKIYLTADSFKQYQERLQYLQEVLRPQVIEEIKEARNQGDLSENAEYDAARDKQATIENEITEIQHILDNYEIIKTQTNRQVSVVRIGSNVSVVSLKDDTVINFQIVGALDTDPFNGKISNTSPLAKAVIGRKAGEVVEVEAPNKYQVKIVHVG</sequence>
<reference key="1">
    <citation type="journal article" date="2008" name="Infect. Immun.">
        <title>Genome of Mycoplasma arthritidis.</title>
        <authorList>
            <person name="Dybvig K."/>
            <person name="Zuhua C."/>
            <person name="Lao P."/>
            <person name="Jordan D.S."/>
            <person name="French C.T."/>
            <person name="Tu A.H."/>
            <person name="Loraine A.E."/>
        </authorList>
    </citation>
    <scope>NUCLEOTIDE SEQUENCE [LARGE SCALE GENOMIC DNA]</scope>
    <source>
        <strain>158L3-1</strain>
    </source>
</reference>
<feature type="chain" id="PRO_1000202862" description="Transcription elongation factor GreA">
    <location>
        <begin position="1"/>
        <end position="159"/>
    </location>
</feature>
<feature type="coiled-coil region" evidence="1">
    <location>
        <begin position="47"/>
        <end position="77"/>
    </location>
</feature>
<accession>B3PM73</accession>
<evidence type="ECO:0000255" key="1">
    <source>
        <dbReference type="HAMAP-Rule" id="MF_00105"/>
    </source>
</evidence>
<proteinExistence type="inferred from homology"/>
<keyword id="KW-0175">Coiled coil</keyword>
<keyword id="KW-0238">DNA-binding</keyword>
<keyword id="KW-1185">Reference proteome</keyword>
<keyword id="KW-0804">Transcription</keyword>
<keyword id="KW-0805">Transcription regulation</keyword>